<gene>
    <name type="primary">pgxB</name>
    <name type="ORF">AN8891</name>
</gene>
<feature type="signal peptide" evidence="2">
    <location>
        <begin position="1"/>
        <end position="20"/>
    </location>
</feature>
<feature type="chain" id="PRO_0000393681" description="Probable exopolygalacturonase B">
    <location>
        <begin position="21"/>
        <end position="440"/>
    </location>
</feature>
<feature type="active site" description="Proton donor" evidence="1">
    <location>
        <position position="260"/>
    </location>
</feature>
<feature type="active site" evidence="1">
    <location>
        <position position="283"/>
    </location>
</feature>
<feature type="glycosylation site" description="N-linked (GlcNAc...) asparagine" evidence="2">
    <location>
        <position position="65"/>
    </location>
</feature>
<feature type="glycosylation site" description="N-linked (GlcNAc...) asparagine" evidence="2">
    <location>
        <position position="190"/>
    </location>
</feature>
<feature type="glycosylation site" description="N-linked (GlcNAc...) asparagine" evidence="2">
    <location>
        <position position="230"/>
    </location>
</feature>
<feature type="glycosylation site" description="N-linked (GlcNAc...) asparagine" evidence="2">
    <location>
        <position position="268"/>
    </location>
</feature>
<feature type="glycosylation site" description="N-linked (GlcNAc...) asparagine" evidence="2">
    <location>
        <position position="280"/>
    </location>
</feature>
<feature type="glycosylation site" description="N-linked (GlcNAc...) asparagine" evidence="2">
    <location>
        <position position="307"/>
    </location>
</feature>
<feature type="glycosylation site" description="N-linked (GlcNAc...) asparagine" evidence="2">
    <location>
        <position position="334"/>
    </location>
</feature>
<feature type="glycosylation site" description="N-linked (GlcNAc...) asparagine" evidence="2">
    <location>
        <position position="371"/>
    </location>
</feature>
<feature type="glycosylation site" description="N-linked (GlcNAc...) asparagine" evidence="2">
    <location>
        <position position="412"/>
    </location>
</feature>
<feature type="disulfide bond" evidence="1">
    <location>
        <begin position="262"/>
        <end position="279"/>
    </location>
</feature>
<feature type="disulfide bond" evidence="1">
    <location>
        <begin position="397"/>
        <end position="403"/>
    </location>
</feature>
<proteinExistence type="evidence at transcript level"/>
<sequence length="440" mass="48661">MRLHFLPLVALCATTASSLAFDSSTSQPPGAQVYSVNDAAGLKRIGAHHPKYHDRRTVTIRSSHNDTDDVSADFLWGIRRANHGGRLLLKKGQKYVIGRKLDLSFLDNVEVQLDGELKFTDDVPYWQENNFYYDFQKSISFWRWGGHDVRIFGRGTLNGNGQRWYNEFAGQEILDPDNTYYRPILFVAENATRLSVEGITELNSPCWTNFLVNSKDISFDNVFINAYSTNASAEPKNTDGFDSLNVNGLSVTNTRVDIGDDCFSPKPNTTNIFVQNLWCNNTHGVSMGSIGQYPGVLDIIEHAYIENVTLLNGENGARLKAWAGEDVGYGRINNITYKNIHVENTDYPIVLDQCYFNIPADECASYPSQVNVTNIVFENVYGTSSGAEGNVVAELICSPNAICEDIKLKGINLTTPEGEKGVVVCDGISGGVGVECQSSE</sequence>
<name>PGXB_EMENI</name>
<reference key="1">
    <citation type="submission" date="2003-02" db="EMBL/GenBank/DDBJ databases">
        <title>Expression cloning of exopolygalacturonase from Aspergillus nidulans.</title>
        <authorList>
            <person name="Ray A."/>
            <person name="Mort A.J."/>
        </authorList>
    </citation>
    <scope>NUCLEOTIDE SEQUENCE [MRNA]</scope>
</reference>
<reference key="2">
    <citation type="journal article" date="2005" name="Nature">
        <title>Sequencing of Aspergillus nidulans and comparative analysis with A. fumigatus and A. oryzae.</title>
        <authorList>
            <person name="Galagan J.E."/>
            <person name="Calvo S.E."/>
            <person name="Cuomo C."/>
            <person name="Ma L.-J."/>
            <person name="Wortman J.R."/>
            <person name="Batzoglou S."/>
            <person name="Lee S.-I."/>
            <person name="Bastuerkmen M."/>
            <person name="Spevak C.C."/>
            <person name="Clutterbuck J."/>
            <person name="Kapitonov V."/>
            <person name="Jurka J."/>
            <person name="Scazzocchio C."/>
            <person name="Farman M.L."/>
            <person name="Butler J."/>
            <person name="Purcell S."/>
            <person name="Harris S."/>
            <person name="Braus G.H."/>
            <person name="Draht O."/>
            <person name="Busch S."/>
            <person name="D'Enfert C."/>
            <person name="Bouchier C."/>
            <person name="Goldman G.H."/>
            <person name="Bell-Pedersen D."/>
            <person name="Griffiths-Jones S."/>
            <person name="Doonan J.H."/>
            <person name="Yu J."/>
            <person name="Vienken K."/>
            <person name="Pain A."/>
            <person name="Freitag M."/>
            <person name="Selker E.U."/>
            <person name="Archer D.B."/>
            <person name="Penalva M.A."/>
            <person name="Oakley B.R."/>
            <person name="Momany M."/>
            <person name="Tanaka T."/>
            <person name="Kumagai T."/>
            <person name="Asai K."/>
            <person name="Machida M."/>
            <person name="Nierman W.C."/>
            <person name="Denning D.W."/>
            <person name="Caddick M.X."/>
            <person name="Hynes M."/>
            <person name="Paoletti M."/>
            <person name="Fischer R."/>
            <person name="Miller B.L."/>
            <person name="Dyer P.S."/>
            <person name="Sachs M.S."/>
            <person name="Osmani S.A."/>
            <person name="Birren B.W."/>
        </authorList>
    </citation>
    <scope>NUCLEOTIDE SEQUENCE [LARGE SCALE GENOMIC DNA]</scope>
    <source>
        <strain>FGSC A4 / ATCC 38163 / CBS 112.46 / NRRL 194 / M139</strain>
    </source>
</reference>
<reference key="3">
    <citation type="journal article" date="2009" name="Fungal Genet. Biol.">
        <title>The 2008 update of the Aspergillus nidulans genome annotation: a community effort.</title>
        <authorList>
            <person name="Wortman J.R."/>
            <person name="Gilsenan J.M."/>
            <person name="Joardar V."/>
            <person name="Deegan J."/>
            <person name="Clutterbuck J."/>
            <person name="Andersen M.R."/>
            <person name="Archer D."/>
            <person name="Bencina M."/>
            <person name="Braus G."/>
            <person name="Coutinho P."/>
            <person name="von Dohren H."/>
            <person name="Doonan J."/>
            <person name="Driessen A.J."/>
            <person name="Durek P."/>
            <person name="Espeso E."/>
            <person name="Fekete E."/>
            <person name="Flipphi M."/>
            <person name="Estrada C.G."/>
            <person name="Geysens S."/>
            <person name="Goldman G."/>
            <person name="de Groot P.W."/>
            <person name="Hansen K."/>
            <person name="Harris S.D."/>
            <person name="Heinekamp T."/>
            <person name="Helmstaedt K."/>
            <person name="Henrissat B."/>
            <person name="Hofmann G."/>
            <person name="Homan T."/>
            <person name="Horio T."/>
            <person name="Horiuchi H."/>
            <person name="James S."/>
            <person name="Jones M."/>
            <person name="Karaffa L."/>
            <person name="Karanyi Z."/>
            <person name="Kato M."/>
            <person name="Keller N."/>
            <person name="Kelly D.E."/>
            <person name="Kiel J.A."/>
            <person name="Kim J.M."/>
            <person name="van der Klei I.J."/>
            <person name="Klis F.M."/>
            <person name="Kovalchuk A."/>
            <person name="Krasevec N."/>
            <person name="Kubicek C.P."/>
            <person name="Liu B."/>
            <person name="Maccabe A."/>
            <person name="Meyer V."/>
            <person name="Mirabito P."/>
            <person name="Miskei M."/>
            <person name="Mos M."/>
            <person name="Mullins J."/>
            <person name="Nelson D.R."/>
            <person name="Nielsen J."/>
            <person name="Oakley B.R."/>
            <person name="Osmani S.A."/>
            <person name="Pakula T."/>
            <person name="Paszewski A."/>
            <person name="Paulsen I."/>
            <person name="Pilsyk S."/>
            <person name="Pocsi I."/>
            <person name="Punt P.J."/>
            <person name="Ram A.F."/>
            <person name="Ren Q."/>
            <person name="Robellet X."/>
            <person name="Robson G."/>
            <person name="Seiboth B."/>
            <person name="van Solingen P."/>
            <person name="Specht T."/>
            <person name="Sun J."/>
            <person name="Taheri-Talesh N."/>
            <person name="Takeshita N."/>
            <person name="Ussery D."/>
            <person name="vanKuyk P.A."/>
            <person name="Visser H."/>
            <person name="van de Vondervoort P.J."/>
            <person name="de Vries R.P."/>
            <person name="Walton J."/>
            <person name="Xiang X."/>
            <person name="Xiong Y."/>
            <person name="Zeng A.P."/>
            <person name="Brandt B.W."/>
            <person name="Cornell M.J."/>
            <person name="van den Hondel C.A."/>
            <person name="Visser J."/>
            <person name="Oliver S.G."/>
            <person name="Turner G."/>
        </authorList>
    </citation>
    <scope>GENOME REANNOTATION</scope>
    <source>
        <strain>FGSC A4 / ATCC 38163 / CBS 112.46 / NRRL 194 / M139</strain>
    </source>
</reference>
<dbReference type="EC" id="3.2.1.67"/>
<dbReference type="EMBL" id="AY237304">
    <property type="protein sequence ID" value="AAO61898.1"/>
    <property type="molecule type" value="mRNA"/>
</dbReference>
<dbReference type="EMBL" id="AACD01000164">
    <property type="protein sequence ID" value="EAA64105.1"/>
    <property type="status" value="ALT_SEQ"/>
    <property type="molecule type" value="Genomic_DNA"/>
</dbReference>
<dbReference type="EMBL" id="BN001307">
    <property type="protein sequence ID" value="CBF84721.1"/>
    <property type="molecule type" value="Genomic_DNA"/>
</dbReference>
<dbReference type="RefSeq" id="XP_682160.1">
    <property type="nucleotide sequence ID" value="XM_677068.1"/>
</dbReference>
<dbReference type="SMR" id="Q873X6"/>
<dbReference type="STRING" id="227321.Q873X6"/>
<dbReference type="CAZy" id="GH28">
    <property type="family name" value="Glycoside Hydrolase Family 28"/>
</dbReference>
<dbReference type="GlyCosmos" id="Q873X6">
    <property type="glycosylation" value="9 sites, No reported glycans"/>
</dbReference>
<dbReference type="EnsemblFungi" id="CBF84721">
    <property type="protein sequence ID" value="CBF84721"/>
    <property type="gene ID" value="ANIA_08891"/>
</dbReference>
<dbReference type="VEuPathDB" id="FungiDB:AN8891"/>
<dbReference type="eggNOG" id="ENOG502QPPR">
    <property type="taxonomic scope" value="Eukaryota"/>
</dbReference>
<dbReference type="HOGENOM" id="CLU_321318_0_0_1"/>
<dbReference type="InParanoid" id="Q873X6"/>
<dbReference type="OMA" id="GYTSGKY"/>
<dbReference type="OrthoDB" id="187139at2759"/>
<dbReference type="Proteomes" id="UP000000560">
    <property type="component" value="Chromosome VII"/>
</dbReference>
<dbReference type="GO" id="GO:0005576">
    <property type="term" value="C:extracellular region"/>
    <property type="evidence" value="ECO:0000250"/>
    <property type="project" value="UniProtKB"/>
</dbReference>
<dbReference type="GO" id="GO:0047911">
    <property type="term" value="F:galacturan 1,4-alpha-galacturonidase activity"/>
    <property type="evidence" value="ECO:0007669"/>
    <property type="project" value="UniProtKB-EC"/>
</dbReference>
<dbReference type="GO" id="GO:0004650">
    <property type="term" value="F:polygalacturonase activity"/>
    <property type="evidence" value="ECO:0000250"/>
    <property type="project" value="UniProtKB"/>
</dbReference>
<dbReference type="GO" id="GO:0071555">
    <property type="term" value="P:cell wall organization"/>
    <property type="evidence" value="ECO:0007669"/>
    <property type="project" value="UniProtKB-KW"/>
</dbReference>
<dbReference type="GO" id="GO:0045490">
    <property type="term" value="P:pectin catabolic process"/>
    <property type="evidence" value="ECO:0000250"/>
    <property type="project" value="UniProtKB"/>
</dbReference>
<dbReference type="FunFam" id="2.160.20.10:FF:000040">
    <property type="entry name" value="Probable exopolygalacturonase B"/>
    <property type="match status" value="1"/>
</dbReference>
<dbReference type="Gene3D" id="2.160.20.10">
    <property type="entry name" value="Single-stranded right-handed beta-helix, Pectin lyase-like"/>
    <property type="match status" value="1"/>
</dbReference>
<dbReference type="InterPro" id="IPR000743">
    <property type="entry name" value="Glyco_hydro_28"/>
</dbReference>
<dbReference type="InterPro" id="IPR012334">
    <property type="entry name" value="Pectin_lyas_fold"/>
</dbReference>
<dbReference type="InterPro" id="IPR011050">
    <property type="entry name" value="Pectin_lyase_fold/virulence"/>
</dbReference>
<dbReference type="PANTHER" id="PTHR31736">
    <property type="match status" value="1"/>
</dbReference>
<dbReference type="PANTHER" id="PTHR31736:SF6">
    <property type="entry name" value="EXOPOLYGALACTURONASE B-RELATED"/>
    <property type="match status" value="1"/>
</dbReference>
<dbReference type="Pfam" id="PF00295">
    <property type="entry name" value="Glyco_hydro_28"/>
    <property type="match status" value="1"/>
</dbReference>
<dbReference type="SUPFAM" id="SSF51126">
    <property type="entry name" value="Pectin lyase-like"/>
    <property type="match status" value="1"/>
</dbReference>
<keyword id="KW-0961">Cell wall biogenesis/degradation</keyword>
<keyword id="KW-1015">Disulfide bond</keyword>
<keyword id="KW-0325">Glycoprotein</keyword>
<keyword id="KW-0326">Glycosidase</keyword>
<keyword id="KW-0378">Hydrolase</keyword>
<keyword id="KW-1185">Reference proteome</keyword>
<keyword id="KW-0677">Repeat</keyword>
<keyword id="KW-0964">Secreted</keyword>
<keyword id="KW-0732">Signal</keyword>
<comment type="function">
    <text evidence="1">Specific in hydrolyzing the terminal glycosidic bond of polygalacturonic acid and oligogalacturonates.</text>
</comment>
<comment type="catalytic activity">
    <reaction>
        <text>[(1-&gt;4)-alpha-D-galacturonosyl](n) + H2O = alpha-D-galacturonate + [(1-&gt;4)-alpha-D-galacturonosyl](n-1)</text>
        <dbReference type="Rhea" id="RHEA:14117"/>
        <dbReference type="Rhea" id="RHEA-COMP:14570"/>
        <dbReference type="Rhea" id="RHEA-COMP:14572"/>
        <dbReference type="ChEBI" id="CHEBI:15377"/>
        <dbReference type="ChEBI" id="CHEBI:58658"/>
        <dbReference type="ChEBI" id="CHEBI:140523"/>
        <dbReference type="EC" id="3.2.1.67"/>
    </reaction>
</comment>
<comment type="subcellular location">
    <subcellularLocation>
        <location evidence="1">Secreted</location>
    </subcellularLocation>
</comment>
<comment type="similarity">
    <text evidence="3">Belongs to the glycosyl hydrolase 28 family.</text>
</comment>
<comment type="sequence caution" evidence="3">
    <conflict type="erroneous gene model prediction">
        <sequence resource="EMBL-CDS" id="EAA64105"/>
    </conflict>
</comment>
<organism>
    <name type="scientific">Emericella nidulans (strain FGSC A4 / ATCC 38163 / CBS 112.46 / NRRL 194 / M139)</name>
    <name type="common">Aspergillus nidulans</name>
    <dbReference type="NCBI Taxonomy" id="227321"/>
    <lineage>
        <taxon>Eukaryota</taxon>
        <taxon>Fungi</taxon>
        <taxon>Dikarya</taxon>
        <taxon>Ascomycota</taxon>
        <taxon>Pezizomycotina</taxon>
        <taxon>Eurotiomycetes</taxon>
        <taxon>Eurotiomycetidae</taxon>
        <taxon>Eurotiales</taxon>
        <taxon>Aspergillaceae</taxon>
        <taxon>Aspergillus</taxon>
        <taxon>Aspergillus subgen. Nidulantes</taxon>
    </lineage>
</organism>
<accession>Q873X6</accession>
<accession>C8VLS8</accession>
<accession>Q5AS39</accession>
<evidence type="ECO:0000250" key="1"/>
<evidence type="ECO:0000255" key="2"/>
<evidence type="ECO:0000305" key="3"/>
<protein>
    <recommendedName>
        <fullName>Probable exopolygalacturonase B</fullName>
        <ecNumber>3.2.1.67</ecNumber>
    </recommendedName>
    <alternativeName>
        <fullName>Galacturan 1,4-alpha-galacturonidase B</fullName>
    </alternativeName>
    <alternativeName>
        <fullName>Poly(1,4-alpha-D-galacturonide)galacturonohydrolase B</fullName>
    </alternativeName>
</protein>